<protein>
    <recommendedName>
        <fullName evidence="1">Matrix protein 2</fullName>
    </recommendedName>
    <alternativeName>
        <fullName evidence="1">Proton channel protein M2</fullName>
    </alternativeName>
</protein>
<gene>
    <name evidence="1" type="primary">M</name>
</gene>
<proteinExistence type="inferred from homology"/>
<evidence type="ECO:0000255" key="1">
    <source>
        <dbReference type="HAMAP-Rule" id="MF_04069"/>
    </source>
</evidence>
<evidence type="ECO:0000256" key="2">
    <source>
        <dbReference type="SAM" id="MobiDB-lite"/>
    </source>
</evidence>
<feature type="chain" id="PRO_0000326363" description="Matrix protein 2">
    <location>
        <begin position="1"/>
        <end position="97"/>
    </location>
</feature>
<feature type="topological domain" description="Virion surface" evidence="1">
    <location>
        <begin position="1"/>
        <end position="22"/>
    </location>
</feature>
<feature type="transmembrane region" description="Helical; Signal-anchor for type III membrane protein" evidence="1">
    <location>
        <begin position="23"/>
        <end position="43"/>
    </location>
</feature>
<feature type="topological domain" description="Intravirion" evidence="1">
    <location>
        <begin position="44"/>
        <end position="97"/>
    </location>
</feature>
<feature type="region of interest" description="Disordered" evidence="2">
    <location>
        <begin position="60"/>
        <end position="88"/>
    </location>
</feature>
<feature type="compositionally biased region" description="Basic and acidic residues" evidence="2">
    <location>
        <begin position="71"/>
        <end position="80"/>
    </location>
</feature>
<feature type="site" description="Essential for channel activity, possibly by being protonated during channel activation, and by forming the channel gate and the selective filter" evidence="1">
    <location>
        <position position="37"/>
    </location>
</feature>
<feature type="site" description="Seems to be involved in pH gating" evidence="1">
    <location>
        <position position="41"/>
    </location>
</feature>
<feature type="modified residue" description="Phosphoserine; by host" evidence="1">
    <location>
        <position position="64"/>
    </location>
</feature>
<feature type="modified residue" description="Phosphoserine; by host" evidence="1">
    <location>
        <position position="93"/>
    </location>
</feature>
<feature type="lipid moiety-binding region" description="S-palmitoyl cysteine; by host" evidence="1">
    <location>
        <position position="50"/>
    </location>
</feature>
<feature type="glycosylation site" description="N-linked (GlcNAc...) asparagine; by host" evidence="1">
    <location>
        <position position="20"/>
    </location>
</feature>
<feature type="disulfide bond" description="Interchain (with C-17)" evidence="1">
    <location>
        <position position="17"/>
    </location>
</feature>
<feature type="disulfide bond" description="Interchain (with C-19)" evidence="1">
    <location>
        <position position="19"/>
    </location>
</feature>
<name>M2_I78A8</name>
<comment type="function">
    <text evidence="1">Forms a proton-selective ion channel that is necessary for the efficient release of the viral genome during virus entry. After attaching to the cell surface, the virion enters the cell by endocytosis. Acidification of the endosome triggers M2 ion channel activity. The influx of protons into virion interior is believed to disrupt interactions between the viral ribonucleoprotein (RNP), matrix protein 1 (M1), and lipid bilayers, thereby freeing the viral genome from interaction with viral proteins and enabling RNA segments to migrate to the host cell nucleus, where influenza virus RNA transcription and replication occur. Also plays a role in viral proteins secretory pathway. Elevates the intravesicular pH of normally acidic compartments, such as trans-Golgi network, preventing newly formed hemagglutinin from premature switching to the fusion-active conformation.</text>
</comment>
<comment type="activity regulation">
    <text>The M2 protein from most influenza A strains is inhibited by amantadine and rimantadine, resulting in viral uncoating incapacity. Emergence of amantadine-resistant variants is usually rapid.</text>
</comment>
<comment type="subunit">
    <text evidence="1">Homotetramer; composed of two disulfide-linked dimers held together by non-covalent interactions. May interact with matrix protein 1.</text>
</comment>
<comment type="subcellular location">
    <subcellularLocation>
        <location evidence="1">Virion membrane</location>
    </subcellularLocation>
    <subcellularLocation>
        <location evidence="1">Host apical cell membrane</location>
        <topology evidence="1">Single-pass type III membrane protein</topology>
    </subcellularLocation>
    <text evidence="1">Abundantly expressed at the apical plasma membrane in infected polarized epithelial cells, in close proximity to budding and assembled virions. Minor component of virions (only 16-20 molecules/virion).</text>
</comment>
<comment type="alternative products">
    <event type="alternative splicing"/>
    <isoform>
        <id>Q2PIM1-1</id>
        <name>M2</name>
        <sequence type="displayed"/>
    </isoform>
    <isoform>
        <id>Q2PIM0-1</id>
        <name>M1</name>
        <sequence type="external"/>
    </isoform>
    <text>Only the first 9 residues are shared by the 2 isoforms.</text>
</comment>
<comment type="domain">
    <text evidence="1">Cytoplasmic tail plays an important role in virion assembly and morphogenesis.</text>
</comment>
<comment type="miscellaneous">
    <text evidence="1">When the channel is activated, one or more imidazole moieties of His-37 probably become bi-protonated.</text>
</comment>
<comment type="similarity">
    <text evidence="1">Belongs to the influenza viruses matrix protein M2 family.</text>
</comment>
<dbReference type="EMBL" id="CY006708">
    <property type="protein sequence ID" value="ABB96343.1"/>
    <property type="molecule type" value="Genomic_RNA"/>
</dbReference>
<dbReference type="SMR" id="Q2PIM1"/>
<dbReference type="GlyCosmos" id="Q2PIM1">
    <property type="glycosylation" value="1 site, No reported glycans"/>
</dbReference>
<dbReference type="Proteomes" id="UP000008574">
    <property type="component" value="Genome"/>
</dbReference>
<dbReference type="GO" id="GO:0020002">
    <property type="term" value="C:host cell plasma membrane"/>
    <property type="evidence" value="ECO:0007669"/>
    <property type="project" value="UniProtKB-SubCell"/>
</dbReference>
<dbReference type="GO" id="GO:0016020">
    <property type="term" value="C:membrane"/>
    <property type="evidence" value="ECO:0007669"/>
    <property type="project" value="UniProtKB-UniRule"/>
</dbReference>
<dbReference type="GO" id="GO:0055036">
    <property type="term" value="C:virion membrane"/>
    <property type="evidence" value="ECO:0007669"/>
    <property type="project" value="UniProtKB-SubCell"/>
</dbReference>
<dbReference type="GO" id="GO:0005216">
    <property type="term" value="F:monoatomic ion channel activity"/>
    <property type="evidence" value="ECO:0007669"/>
    <property type="project" value="UniProtKB-UniRule"/>
</dbReference>
<dbReference type="GO" id="GO:0015078">
    <property type="term" value="F:proton transmembrane transporter activity"/>
    <property type="evidence" value="ECO:0007669"/>
    <property type="project" value="UniProtKB-UniRule"/>
</dbReference>
<dbReference type="GO" id="GO:0051259">
    <property type="term" value="P:protein complex oligomerization"/>
    <property type="evidence" value="ECO:0007669"/>
    <property type="project" value="UniProtKB-UniRule"/>
</dbReference>
<dbReference type="GO" id="GO:0044694">
    <property type="term" value="P:symbiont genome entry into host cell via pore formation in plasma membrane"/>
    <property type="evidence" value="ECO:0007669"/>
    <property type="project" value="UniProtKB-UniRule"/>
</dbReference>
<dbReference type="GO" id="GO:0140321">
    <property type="term" value="P:symbiont-mediated suppression of host autophagy"/>
    <property type="evidence" value="ECO:0007669"/>
    <property type="project" value="UniProtKB-KW"/>
</dbReference>
<dbReference type="Gene3D" id="6.10.250.1640">
    <property type="match status" value="1"/>
</dbReference>
<dbReference type="HAMAP" id="MF_04069">
    <property type="entry name" value="INFV_M2"/>
    <property type="match status" value="1"/>
</dbReference>
<dbReference type="InterPro" id="IPR002089">
    <property type="entry name" value="Flu_M2"/>
</dbReference>
<dbReference type="Pfam" id="PF00599">
    <property type="entry name" value="Flu_M2"/>
    <property type="match status" value="1"/>
</dbReference>
<sequence length="97" mass="11213">MSLLTEVETPIRNEWGCRCNDSSDPLVVAASIIGILHLILWILDRLFFKCIYRFFEHGLKRGPSTEGVPESMREEYRKEQQNAVDADDSHFVSIELE</sequence>
<reference key="1">
    <citation type="submission" date="2005-12" db="EMBL/GenBank/DDBJ databases">
        <title>The NIAID influenza genome sequencing project.</title>
        <authorList>
            <person name="Ghedin E."/>
            <person name="Spiro D."/>
            <person name="Miller N."/>
            <person name="Zaborsky J."/>
            <person name="Feldblyum T."/>
            <person name="Subbu V."/>
            <person name="Shumway M."/>
            <person name="Sparenborg J."/>
            <person name="Groveman L."/>
            <person name="Halpin R."/>
            <person name="Sitz J."/>
            <person name="Koo H."/>
            <person name="Salzberg S.L."/>
            <person name="Webster R.G."/>
            <person name="Hoffmann E."/>
            <person name="Krauss S."/>
            <person name="Naeve C."/>
            <person name="Bao Y."/>
            <person name="Bolotov P."/>
            <person name="Dernovoy D."/>
            <person name="Kiryutin B."/>
            <person name="Lipman D.J."/>
            <person name="Tatusova T."/>
        </authorList>
    </citation>
    <scope>NUCLEOTIDE SEQUENCE [GENOMIC RNA]</scope>
</reference>
<organism>
    <name type="scientific">Influenza A virus (strain A/Memphis/18/1978 H3N2)</name>
    <dbReference type="NCBI Taxonomy" id="383579"/>
    <lineage>
        <taxon>Viruses</taxon>
        <taxon>Riboviria</taxon>
        <taxon>Orthornavirae</taxon>
        <taxon>Negarnaviricota</taxon>
        <taxon>Polyploviricotina</taxon>
        <taxon>Insthoviricetes</taxon>
        <taxon>Articulavirales</taxon>
        <taxon>Orthomyxoviridae</taxon>
        <taxon>Alphainfluenzavirus</taxon>
        <taxon>Alphainfluenzavirus influenzae</taxon>
        <taxon>Influenza A virus</taxon>
    </lineage>
</organism>
<organismHost>
    <name type="scientific">Aves</name>
    <dbReference type="NCBI Taxonomy" id="8782"/>
</organismHost>
<organismHost>
    <name type="scientific">Cetacea</name>
    <name type="common">whales</name>
    <dbReference type="NCBI Taxonomy" id="9721"/>
</organismHost>
<organismHost>
    <name type="scientific">Homo sapiens</name>
    <name type="common">Human</name>
    <dbReference type="NCBI Taxonomy" id="9606"/>
</organismHost>
<organismHost>
    <name type="scientific">Phocidae</name>
    <name type="common">true seals</name>
    <dbReference type="NCBI Taxonomy" id="9709"/>
</organismHost>
<organismHost>
    <name type="scientific">Sus scrofa</name>
    <name type="common">Pig</name>
    <dbReference type="NCBI Taxonomy" id="9823"/>
</organismHost>
<keyword id="KW-0025">Alternative splicing</keyword>
<keyword id="KW-1015">Disulfide bond</keyword>
<keyword id="KW-0325">Glycoprotein</keyword>
<keyword id="KW-1032">Host cell membrane</keyword>
<keyword id="KW-1043">Host membrane</keyword>
<keyword id="KW-0945">Host-virus interaction</keyword>
<keyword id="KW-0375">Hydrogen ion transport</keyword>
<keyword id="KW-1083">Inhibition of host autophagy by virus</keyword>
<keyword id="KW-0407">Ion channel</keyword>
<keyword id="KW-0406">Ion transport</keyword>
<keyword id="KW-0449">Lipoprotein</keyword>
<keyword id="KW-0472">Membrane</keyword>
<keyword id="KW-0564">Palmitate</keyword>
<keyword id="KW-0597">Phosphoprotein</keyword>
<keyword id="KW-0735">Signal-anchor</keyword>
<keyword id="KW-0812">Transmembrane</keyword>
<keyword id="KW-1133">Transmembrane helix</keyword>
<keyword id="KW-0813">Transport</keyword>
<keyword id="KW-1182">Viral ion channel</keyword>
<keyword id="KW-0946">Virion</keyword>
<accession>Q2PIM1</accession>